<organism>
    <name type="scientific">Pseudoalteromonas sp</name>
    <dbReference type="NCBI Taxonomy" id="53249"/>
    <lineage>
        <taxon>Bacteria</taxon>
        <taxon>Pseudomonadati</taxon>
        <taxon>Pseudomonadota</taxon>
        <taxon>Gammaproteobacteria</taxon>
        <taxon>Alteromonadales</taxon>
        <taxon>Pseudoalteromonadaceae</taxon>
        <taxon>Pseudoalteromonas</taxon>
    </lineage>
</organism>
<proteinExistence type="evidence at protein level"/>
<sequence>MKIKILSAMIASSLLIGCVIPTVKASQSAIKSIETNRTITKVRTGMLSGGSSIITTSYEGTVAAYKFNGEKLWENELSGFMNHDIWVQDINGDGLVEIFAANADGNVYCINSDGSLKWTFGLNEVPMNSVTVISDADEKYVVAGGYDKNLYYISANGELLKTIESSAYSEEGVFGDGVKPEARTHTVNFVRPVKSSDGTEKLVVLGTNNSLQSSGRFYIFEPFADLPSEKSRISIKKGIGDLRTVDFDNDGNDELTLGNSAQIGDAAISVMNLDDLSQKKSQINDIARRIDRFGYRVAQTEVVMNEGTPTYLTLFGSRILLTPESFDVNDSEILANKYSYYDIWKDKSSNKLVLASAQSGGSQVHIIDTSNPSWKSAYEELEPQGKLAAIQENTREVERQLSNFQKPTRERAPLPVYFISESRNEIPATIERSESLYDSPVFLNYSTLPNVENWDRSEVLADNPKYRDKRDRRKNYTLSSEEMFNKLSAGYESSDGISQWAGHGNDPYMISLATMKRIISSGDGKKTVNIYPEIEGHGDAFNKVLNDHFYPLAEFSSENNANLFMRNKHTFWQSTIYAPEWSELRSGRLADAFVPAMEETTDKSMEMSVAGRMGLWAAGSVDNWGERYARDNPSFDRLRQHSHQMVPNHALRQIIYKIASGARYINNFGFNQEYMSLAWELIGKGALYVPKREELLSLSPVHISMKEPDPIYRETSNNVKWTTFYDEEKDSIPYVFSRLNGTWPGAKTLPWDYSNYAADTKERRLDFIPKFPKGLVLITPVQQGKFKDEGTVRGTLADNMHPIYKDIMKEYITDGKNYYNANGEQVMAADSVRYRQIKNKIEEKSNLLPMTVSGEAAWVVAQSARKHLRLTLVDSGYLNPSNKVAKVKFNSVTPVAIVDVLSGETFSPDSNGVVEIPVLAGAFRFIDVKITEDLRNMQSSTL</sequence>
<dbReference type="EC" id="3.2.1.162"/>
<dbReference type="EMBL" id="AB261169">
    <property type="protein sequence ID" value="BAF35571.1"/>
    <property type="molecule type" value="Genomic_DNA"/>
</dbReference>
<dbReference type="KEGG" id="ag:BAF35571"/>
<dbReference type="BRENDA" id="3.2.1.162">
    <property type="organism ID" value="7116"/>
</dbReference>
<dbReference type="GO" id="GO:0005576">
    <property type="term" value="C:extracellular region"/>
    <property type="evidence" value="ECO:0000314"/>
    <property type="project" value="UniProtKB"/>
</dbReference>
<dbReference type="GO" id="GO:0033957">
    <property type="term" value="F:lambda-carrageenase activity"/>
    <property type="evidence" value="ECO:0000314"/>
    <property type="project" value="UniProtKB"/>
</dbReference>
<dbReference type="GO" id="GO:0071555">
    <property type="term" value="P:cell wall organization"/>
    <property type="evidence" value="ECO:0007669"/>
    <property type="project" value="UniProtKB-KW"/>
</dbReference>
<dbReference type="GO" id="GO:0000272">
    <property type="term" value="P:polysaccharide catabolic process"/>
    <property type="evidence" value="ECO:0000314"/>
    <property type="project" value="UniProtKB"/>
</dbReference>
<dbReference type="FunFam" id="2.130.10.10:FF:002292">
    <property type="entry name" value="Lambda-carrageenase"/>
    <property type="match status" value="1"/>
</dbReference>
<dbReference type="Gene3D" id="2.130.10.10">
    <property type="entry name" value="YVTN repeat-like/Quinoprotein amine dehydrogenase"/>
    <property type="match status" value="1"/>
</dbReference>
<dbReference type="InterPro" id="IPR011047">
    <property type="entry name" value="Quinoprotein_ADH-like_sf"/>
</dbReference>
<dbReference type="InterPro" id="IPR015943">
    <property type="entry name" value="WD40/YVTN_repeat-like_dom_sf"/>
</dbReference>
<dbReference type="Pfam" id="PF25292">
    <property type="entry name" value="Beta-prop_CGLA"/>
    <property type="match status" value="1"/>
</dbReference>
<dbReference type="Pfam" id="PF25291">
    <property type="entry name" value="CGLA_C"/>
    <property type="match status" value="1"/>
</dbReference>
<dbReference type="Pfam" id="PF25290">
    <property type="entry name" value="CGLA_M"/>
    <property type="match status" value="1"/>
</dbReference>
<dbReference type="SUPFAM" id="SSF50998">
    <property type="entry name" value="Quinoprotein alcohol dehydrogenase-like"/>
    <property type="match status" value="1"/>
</dbReference>
<evidence type="ECO:0000250" key="1">
    <source>
        <dbReference type="UniProtKB" id="Q0JRK4"/>
    </source>
</evidence>
<evidence type="ECO:0000269" key="2">
    <source>
    </source>
</evidence>
<evidence type="ECO:0000305" key="3"/>
<evidence type="ECO:0000312" key="4">
    <source>
        <dbReference type="EMBL" id="BAF35571.1"/>
    </source>
</evidence>
<name>CGLA_PSEAS</name>
<accession>Q05JY7</accession>
<comment type="function">
    <text evidence="1 2">Hydrolyzes lambda-carrageenan with inversion of anomeric configuration. Does not hydrolyze iota- and kappa-carrageenans, agarose or porphyran.</text>
</comment>
<comment type="catalytic activity">
    <reaction evidence="2">
        <text>Endohydrolysis of (1-&gt;4)-beta-linkages in the backbone of lambda-carrageenan, resulting in the tetrasaccharide alpha-D-Galp2,6S2-(1-&gt;3)-beta-D-Galp2S-(1-&gt;4)-alpha-D-Galp2,6S2-(1-&gt;3)-D-Galp2S.</text>
        <dbReference type="EC" id="3.2.1.162"/>
    </reaction>
</comment>
<comment type="biophysicochemical properties">
    <phDependence>
        <text evidence="2">Optimum pH is 7.0.</text>
    </phDependence>
    <temperatureDependence>
        <text evidence="2">Optimum temperature is 35 degrees Celsius. Retains significant activity in the low temperature range (less than 10 degrees Celsius).</text>
    </temperatureDependence>
</comment>
<comment type="subunit">
    <text evidence="2">Monomer.</text>
</comment>
<comment type="subcellular location">
    <subcellularLocation>
        <location evidence="2">Secreted</location>
    </subcellularLocation>
</comment>
<gene>
    <name evidence="4" type="primary">cglA</name>
</gene>
<keyword id="KW-0119">Carbohydrate metabolism</keyword>
<keyword id="KW-0961">Cell wall biogenesis/degradation</keyword>
<keyword id="KW-0903">Direct protein sequencing</keyword>
<keyword id="KW-0326">Glycosidase</keyword>
<keyword id="KW-0378">Hydrolase</keyword>
<keyword id="KW-0624">Polysaccharide degradation</keyword>
<keyword id="KW-0964">Secreted</keyword>
<keyword id="KW-0732">Signal</keyword>
<feature type="signal peptide" evidence="2">
    <location>
        <begin position="1"/>
        <end position="25"/>
    </location>
</feature>
<feature type="chain" id="PRO_0000398807" description="Lambda-carrageenase" evidence="2">
    <location>
        <begin position="26"/>
        <end position="942"/>
    </location>
</feature>
<protein>
    <recommendedName>
        <fullName evidence="4">Lambda-carrageenase</fullName>
        <ecNumber>3.2.1.162</ecNumber>
    </recommendedName>
</protein>
<reference evidence="3 4" key="1">
    <citation type="journal article" date="2006" name="J. Biochem.">
        <title>A novel enzyme, lambda-carrageenase, isolated from a deep-sea bacterium.</title>
        <authorList>
            <person name="Ohta Y."/>
            <person name="Hatada Y."/>
        </authorList>
    </citation>
    <scope>NUCLEOTIDE SEQUENCE [GENOMIC DNA]</scope>
    <scope>PROTEIN SEQUENCE OF 26-45; 231-242 AND 604-614</scope>
    <scope>FUNCTION</scope>
    <scope>CATALYTIC ACTIVITY</scope>
    <scope>BIOPHYSICOCHEMICAL PROPERTIES</scope>
    <scope>SUBUNIT</scope>
    <scope>SUBCELLULAR LOCATION</scope>
    <source>
        <strain evidence="4">CL19</strain>
    </source>
</reference>